<feature type="chain" id="PRO_0000132162" description="Small ribosomal subunit protein uS13">
    <location>
        <begin position="1"/>
        <end position="121"/>
    </location>
</feature>
<feature type="region of interest" description="Disordered" evidence="2">
    <location>
        <begin position="94"/>
        <end position="121"/>
    </location>
</feature>
<protein>
    <recommendedName>
        <fullName evidence="1">Small ribosomal subunit protein uS13</fullName>
    </recommendedName>
    <alternativeName>
        <fullName evidence="3">30S ribosomal protein S13</fullName>
    </alternativeName>
</protein>
<organism>
    <name type="scientific">Treponema pallidum (strain Nichols)</name>
    <dbReference type="NCBI Taxonomy" id="243276"/>
    <lineage>
        <taxon>Bacteria</taxon>
        <taxon>Pseudomonadati</taxon>
        <taxon>Spirochaetota</taxon>
        <taxon>Spirochaetia</taxon>
        <taxon>Spirochaetales</taxon>
        <taxon>Treponemataceae</taxon>
        <taxon>Treponema</taxon>
    </lineage>
</organism>
<comment type="function">
    <text evidence="1">Located at the top of the head of the 30S subunit, it contacts several helices of the 16S rRNA. In the 70S ribosome it contacts the 23S rRNA (bridge B1a) and protein L5 of the 50S subunit (bridge B1b), connecting the 2 subunits; these bridges are implicated in subunit movement. Contacts the tRNAs in the A and P-sites.</text>
</comment>
<comment type="subunit">
    <text evidence="1">Part of the 30S ribosomal subunit. Forms a loose heterodimer with protein S19. Forms two bridges to the 50S subunit in the 70S ribosome.</text>
</comment>
<comment type="similarity">
    <text evidence="1">Belongs to the universal ribosomal protein uS13 family.</text>
</comment>
<keyword id="KW-1185">Reference proteome</keyword>
<keyword id="KW-0687">Ribonucleoprotein</keyword>
<keyword id="KW-0689">Ribosomal protein</keyword>
<keyword id="KW-0694">RNA-binding</keyword>
<keyword id="KW-0699">rRNA-binding</keyword>
<keyword id="KW-0820">tRNA-binding</keyword>
<name>RS13_TREPA</name>
<accession>O83240</accession>
<sequence length="121" mass="13634">MARIAGVDLPNKHVSVALTYIYGISRSSARTICEKARISSACLINDLSQDELAVVRAIIDREYKVEGRLRTEVALNIKRLMDIGCYRGLRHRKGLPVRGQRTRTNARTRKGKRKTVAGKKK</sequence>
<evidence type="ECO:0000255" key="1">
    <source>
        <dbReference type="HAMAP-Rule" id="MF_01315"/>
    </source>
</evidence>
<evidence type="ECO:0000256" key="2">
    <source>
        <dbReference type="SAM" id="MobiDB-lite"/>
    </source>
</evidence>
<evidence type="ECO:0000305" key="3"/>
<gene>
    <name evidence="1" type="primary">rpsM</name>
    <name type="ordered locus">TP_0210</name>
</gene>
<proteinExistence type="inferred from homology"/>
<reference key="1">
    <citation type="journal article" date="1998" name="Science">
        <title>Complete genome sequence of Treponema pallidum, the syphilis spirochete.</title>
        <authorList>
            <person name="Fraser C.M."/>
            <person name="Norris S.J."/>
            <person name="Weinstock G.M."/>
            <person name="White O."/>
            <person name="Sutton G.G."/>
            <person name="Dodson R.J."/>
            <person name="Gwinn M.L."/>
            <person name="Hickey E.K."/>
            <person name="Clayton R.A."/>
            <person name="Ketchum K.A."/>
            <person name="Sodergren E."/>
            <person name="Hardham J.M."/>
            <person name="McLeod M.P."/>
            <person name="Salzberg S.L."/>
            <person name="Peterson J.D."/>
            <person name="Khalak H.G."/>
            <person name="Richardson D.L."/>
            <person name="Howell J.K."/>
            <person name="Chidambaram M."/>
            <person name="Utterback T.R."/>
            <person name="McDonald L.A."/>
            <person name="Artiach P."/>
            <person name="Bowman C."/>
            <person name="Cotton M.D."/>
            <person name="Fujii C."/>
            <person name="Garland S.A."/>
            <person name="Hatch B."/>
            <person name="Horst K."/>
            <person name="Roberts K.M."/>
            <person name="Sandusky M."/>
            <person name="Weidman J.F."/>
            <person name="Smith H.O."/>
            <person name="Venter J.C."/>
        </authorList>
    </citation>
    <scope>NUCLEOTIDE SEQUENCE [LARGE SCALE GENOMIC DNA]</scope>
    <source>
        <strain>Nichols</strain>
    </source>
</reference>
<dbReference type="EMBL" id="AE000520">
    <property type="protein sequence ID" value="AAC65199.1"/>
    <property type="molecule type" value="Genomic_DNA"/>
</dbReference>
<dbReference type="PIR" id="H71351">
    <property type="entry name" value="H71351"/>
</dbReference>
<dbReference type="RefSeq" id="WP_010881658.1">
    <property type="nucleotide sequence ID" value="NC_021490.2"/>
</dbReference>
<dbReference type="SMR" id="O83240"/>
<dbReference type="IntAct" id="O83240">
    <property type="interactions" value="3"/>
</dbReference>
<dbReference type="STRING" id="243276.TP_0210"/>
<dbReference type="EnsemblBacteria" id="AAC65199">
    <property type="protein sequence ID" value="AAC65199"/>
    <property type="gene ID" value="TP_0210"/>
</dbReference>
<dbReference type="GeneID" id="93875998"/>
<dbReference type="KEGG" id="tpa:TP_0210"/>
<dbReference type="KEGG" id="tpw:TPANIC_0210"/>
<dbReference type="eggNOG" id="COG0099">
    <property type="taxonomic scope" value="Bacteria"/>
</dbReference>
<dbReference type="HOGENOM" id="CLU_103849_1_2_12"/>
<dbReference type="OrthoDB" id="9803610at2"/>
<dbReference type="Proteomes" id="UP000000811">
    <property type="component" value="Chromosome"/>
</dbReference>
<dbReference type="GO" id="GO:0005829">
    <property type="term" value="C:cytosol"/>
    <property type="evidence" value="ECO:0007669"/>
    <property type="project" value="TreeGrafter"/>
</dbReference>
<dbReference type="GO" id="GO:0015935">
    <property type="term" value="C:small ribosomal subunit"/>
    <property type="evidence" value="ECO:0007669"/>
    <property type="project" value="TreeGrafter"/>
</dbReference>
<dbReference type="GO" id="GO:0019843">
    <property type="term" value="F:rRNA binding"/>
    <property type="evidence" value="ECO:0007669"/>
    <property type="project" value="UniProtKB-UniRule"/>
</dbReference>
<dbReference type="GO" id="GO:0003735">
    <property type="term" value="F:structural constituent of ribosome"/>
    <property type="evidence" value="ECO:0007669"/>
    <property type="project" value="InterPro"/>
</dbReference>
<dbReference type="GO" id="GO:0000049">
    <property type="term" value="F:tRNA binding"/>
    <property type="evidence" value="ECO:0007669"/>
    <property type="project" value="UniProtKB-UniRule"/>
</dbReference>
<dbReference type="GO" id="GO:0006412">
    <property type="term" value="P:translation"/>
    <property type="evidence" value="ECO:0007669"/>
    <property type="project" value="UniProtKB-UniRule"/>
</dbReference>
<dbReference type="FunFam" id="1.10.8.50:FF:000001">
    <property type="entry name" value="30S ribosomal protein S13"/>
    <property type="match status" value="1"/>
</dbReference>
<dbReference type="FunFam" id="4.10.910.10:FF:000001">
    <property type="entry name" value="30S ribosomal protein S13"/>
    <property type="match status" value="1"/>
</dbReference>
<dbReference type="Gene3D" id="1.10.8.50">
    <property type="match status" value="1"/>
</dbReference>
<dbReference type="Gene3D" id="4.10.910.10">
    <property type="entry name" value="30s ribosomal protein s13, domain 2"/>
    <property type="match status" value="1"/>
</dbReference>
<dbReference type="HAMAP" id="MF_01315">
    <property type="entry name" value="Ribosomal_uS13"/>
    <property type="match status" value="1"/>
</dbReference>
<dbReference type="InterPro" id="IPR027437">
    <property type="entry name" value="Rbsml_uS13_C"/>
</dbReference>
<dbReference type="InterPro" id="IPR001892">
    <property type="entry name" value="Ribosomal_uS13"/>
</dbReference>
<dbReference type="InterPro" id="IPR010979">
    <property type="entry name" value="Ribosomal_uS13-like_H2TH"/>
</dbReference>
<dbReference type="InterPro" id="IPR019980">
    <property type="entry name" value="Ribosomal_uS13_bac-type"/>
</dbReference>
<dbReference type="InterPro" id="IPR018269">
    <property type="entry name" value="Ribosomal_uS13_CS"/>
</dbReference>
<dbReference type="NCBIfam" id="TIGR03631">
    <property type="entry name" value="uS13_bact"/>
    <property type="match status" value="1"/>
</dbReference>
<dbReference type="PANTHER" id="PTHR10871">
    <property type="entry name" value="30S RIBOSOMAL PROTEIN S13/40S RIBOSOMAL PROTEIN S18"/>
    <property type="match status" value="1"/>
</dbReference>
<dbReference type="PANTHER" id="PTHR10871:SF1">
    <property type="entry name" value="SMALL RIBOSOMAL SUBUNIT PROTEIN US13M"/>
    <property type="match status" value="1"/>
</dbReference>
<dbReference type="Pfam" id="PF00416">
    <property type="entry name" value="Ribosomal_S13"/>
    <property type="match status" value="1"/>
</dbReference>
<dbReference type="PIRSF" id="PIRSF002134">
    <property type="entry name" value="Ribosomal_S13"/>
    <property type="match status" value="1"/>
</dbReference>
<dbReference type="SUPFAM" id="SSF46946">
    <property type="entry name" value="S13-like H2TH domain"/>
    <property type="match status" value="1"/>
</dbReference>
<dbReference type="PROSITE" id="PS00646">
    <property type="entry name" value="RIBOSOMAL_S13_1"/>
    <property type="match status" value="1"/>
</dbReference>
<dbReference type="PROSITE" id="PS50159">
    <property type="entry name" value="RIBOSOMAL_S13_2"/>
    <property type="match status" value="1"/>
</dbReference>